<reference key="1">
    <citation type="journal article" date="2001" name="Science">
        <title>Comparative genomics of Listeria species.</title>
        <authorList>
            <person name="Glaser P."/>
            <person name="Frangeul L."/>
            <person name="Buchrieser C."/>
            <person name="Rusniok C."/>
            <person name="Amend A."/>
            <person name="Baquero F."/>
            <person name="Berche P."/>
            <person name="Bloecker H."/>
            <person name="Brandt P."/>
            <person name="Chakraborty T."/>
            <person name="Charbit A."/>
            <person name="Chetouani F."/>
            <person name="Couve E."/>
            <person name="de Daruvar A."/>
            <person name="Dehoux P."/>
            <person name="Domann E."/>
            <person name="Dominguez-Bernal G."/>
            <person name="Duchaud E."/>
            <person name="Durant L."/>
            <person name="Dussurget O."/>
            <person name="Entian K.-D."/>
            <person name="Fsihi H."/>
            <person name="Garcia-del Portillo F."/>
            <person name="Garrido P."/>
            <person name="Gautier L."/>
            <person name="Goebel W."/>
            <person name="Gomez-Lopez N."/>
            <person name="Hain T."/>
            <person name="Hauf J."/>
            <person name="Jackson D."/>
            <person name="Jones L.-M."/>
            <person name="Kaerst U."/>
            <person name="Kreft J."/>
            <person name="Kuhn M."/>
            <person name="Kunst F."/>
            <person name="Kurapkat G."/>
            <person name="Madueno E."/>
            <person name="Maitournam A."/>
            <person name="Mata Vicente J."/>
            <person name="Ng E."/>
            <person name="Nedjari H."/>
            <person name="Nordsiek G."/>
            <person name="Novella S."/>
            <person name="de Pablos B."/>
            <person name="Perez-Diaz J.-C."/>
            <person name="Purcell R."/>
            <person name="Remmel B."/>
            <person name="Rose M."/>
            <person name="Schlueter T."/>
            <person name="Simoes N."/>
            <person name="Tierrez A."/>
            <person name="Vazquez-Boland J.-A."/>
            <person name="Voss H."/>
            <person name="Wehland J."/>
            <person name="Cossart P."/>
        </authorList>
    </citation>
    <scope>NUCLEOTIDE SEQUENCE [LARGE SCALE GENOMIC DNA]</scope>
    <source>
        <strain>ATCC BAA-680 / CLIP 11262</strain>
    </source>
</reference>
<feature type="chain" id="PRO_0000155820" description="Quinolinate synthase">
    <location>
        <begin position="1"/>
        <end position="366"/>
    </location>
</feature>
<feature type="binding site" evidence="1">
    <location>
        <position position="44"/>
    </location>
    <ligand>
        <name>iminosuccinate</name>
        <dbReference type="ChEBI" id="CHEBI:77875"/>
    </ligand>
</feature>
<feature type="binding site" evidence="1">
    <location>
        <position position="61"/>
    </location>
    <ligand>
        <name>iminosuccinate</name>
        <dbReference type="ChEBI" id="CHEBI:77875"/>
    </ligand>
</feature>
<feature type="binding site" evidence="1">
    <location>
        <position position="108"/>
    </location>
    <ligand>
        <name>[4Fe-4S] cluster</name>
        <dbReference type="ChEBI" id="CHEBI:49883"/>
    </ligand>
</feature>
<feature type="binding site" evidence="1">
    <location>
        <begin position="139"/>
        <end position="141"/>
    </location>
    <ligand>
        <name>iminosuccinate</name>
        <dbReference type="ChEBI" id="CHEBI:77875"/>
    </ligand>
</feature>
<feature type="binding site" evidence="1">
    <location>
        <position position="160"/>
    </location>
    <ligand>
        <name>iminosuccinate</name>
        <dbReference type="ChEBI" id="CHEBI:77875"/>
    </ligand>
</feature>
<feature type="binding site" evidence="1">
    <location>
        <position position="228"/>
    </location>
    <ligand>
        <name>[4Fe-4S] cluster</name>
        <dbReference type="ChEBI" id="CHEBI:49883"/>
    </ligand>
</feature>
<feature type="binding site" evidence="1">
    <location>
        <begin position="254"/>
        <end position="256"/>
    </location>
    <ligand>
        <name>iminosuccinate</name>
        <dbReference type="ChEBI" id="CHEBI:77875"/>
    </ligand>
</feature>
<feature type="binding site" evidence="1">
    <location>
        <position position="271"/>
    </location>
    <ligand>
        <name>iminosuccinate</name>
        <dbReference type="ChEBI" id="CHEBI:77875"/>
    </ligand>
</feature>
<feature type="binding site" evidence="1">
    <location>
        <position position="318"/>
    </location>
    <ligand>
        <name>[4Fe-4S] cluster</name>
        <dbReference type="ChEBI" id="CHEBI:49883"/>
    </ligand>
</feature>
<organism>
    <name type="scientific">Listeria innocua serovar 6a (strain ATCC BAA-680 / CLIP 11262)</name>
    <dbReference type="NCBI Taxonomy" id="272626"/>
    <lineage>
        <taxon>Bacteria</taxon>
        <taxon>Bacillati</taxon>
        <taxon>Bacillota</taxon>
        <taxon>Bacilli</taxon>
        <taxon>Bacillales</taxon>
        <taxon>Listeriaceae</taxon>
        <taxon>Listeria</taxon>
    </lineage>
</organism>
<gene>
    <name evidence="1" type="primary">nadA</name>
    <name type="ordered locus">lin2133</name>
</gene>
<accession>Q929Z0</accession>
<dbReference type="EC" id="2.5.1.72" evidence="1"/>
<dbReference type="EMBL" id="AL596171">
    <property type="protein sequence ID" value="CAC97363.1"/>
    <property type="molecule type" value="Genomic_DNA"/>
</dbReference>
<dbReference type="PIR" id="AC1699">
    <property type="entry name" value="AC1699"/>
</dbReference>
<dbReference type="RefSeq" id="WP_010991772.1">
    <property type="nucleotide sequence ID" value="NC_003212.1"/>
</dbReference>
<dbReference type="SMR" id="Q929Z0"/>
<dbReference type="STRING" id="272626.gene:17566491"/>
<dbReference type="KEGG" id="lin:nadA"/>
<dbReference type="eggNOG" id="COG0379">
    <property type="taxonomic scope" value="Bacteria"/>
</dbReference>
<dbReference type="HOGENOM" id="CLU_047382_2_0_9"/>
<dbReference type="OrthoDB" id="9801204at2"/>
<dbReference type="UniPathway" id="UPA00253">
    <property type="reaction ID" value="UER00327"/>
</dbReference>
<dbReference type="Proteomes" id="UP000002513">
    <property type="component" value="Chromosome"/>
</dbReference>
<dbReference type="GO" id="GO:0005829">
    <property type="term" value="C:cytosol"/>
    <property type="evidence" value="ECO:0007669"/>
    <property type="project" value="TreeGrafter"/>
</dbReference>
<dbReference type="GO" id="GO:0051539">
    <property type="term" value="F:4 iron, 4 sulfur cluster binding"/>
    <property type="evidence" value="ECO:0007669"/>
    <property type="project" value="UniProtKB-KW"/>
</dbReference>
<dbReference type="GO" id="GO:0046872">
    <property type="term" value="F:metal ion binding"/>
    <property type="evidence" value="ECO:0007669"/>
    <property type="project" value="UniProtKB-KW"/>
</dbReference>
<dbReference type="GO" id="GO:0008987">
    <property type="term" value="F:quinolinate synthetase A activity"/>
    <property type="evidence" value="ECO:0007669"/>
    <property type="project" value="UniProtKB-UniRule"/>
</dbReference>
<dbReference type="GO" id="GO:0034628">
    <property type="term" value="P:'de novo' NAD biosynthetic process from L-aspartate"/>
    <property type="evidence" value="ECO:0007669"/>
    <property type="project" value="TreeGrafter"/>
</dbReference>
<dbReference type="FunFam" id="3.40.50.10800:FF:000001">
    <property type="entry name" value="Quinolinate synthase A"/>
    <property type="match status" value="1"/>
</dbReference>
<dbReference type="Gene3D" id="3.40.50.10800">
    <property type="entry name" value="NadA-like"/>
    <property type="match status" value="3"/>
</dbReference>
<dbReference type="HAMAP" id="MF_00569">
    <property type="entry name" value="NadA_type3"/>
    <property type="match status" value="1"/>
</dbReference>
<dbReference type="InterPro" id="IPR003473">
    <property type="entry name" value="NadA"/>
</dbReference>
<dbReference type="InterPro" id="IPR036094">
    <property type="entry name" value="NadA_sf"/>
</dbReference>
<dbReference type="InterPro" id="IPR023515">
    <property type="entry name" value="Quinolinate_synth_A_type3"/>
</dbReference>
<dbReference type="NCBIfam" id="TIGR00550">
    <property type="entry name" value="nadA"/>
    <property type="match status" value="1"/>
</dbReference>
<dbReference type="NCBIfam" id="NF006880">
    <property type="entry name" value="PRK09375.2-1"/>
    <property type="match status" value="1"/>
</dbReference>
<dbReference type="NCBIfam" id="NF006883">
    <property type="entry name" value="PRK09375.2-4"/>
    <property type="match status" value="1"/>
</dbReference>
<dbReference type="PANTHER" id="PTHR30573:SF0">
    <property type="entry name" value="QUINOLINATE SYNTHASE, CHLOROPLASTIC"/>
    <property type="match status" value="1"/>
</dbReference>
<dbReference type="PANTHER" id="PTHR30573">
    <property type="entry name" value="QUINOLINATE SYNTHETASE A"/>
    <property type="match status" value="1"/>
</dbReference>
<dbReference type="Pfam" id="PF02445">
    <property type="entry name" value="NadA"/>
    <property type="match status" value="1"/>
</dbReference>
<dbReference type="SUPFAM" id="SSF142754">
    <property type="entry name" value="NadA-like"/>
    <property type="match status" value="1"/>
</dbReference>
<evidence type="ECO:0000255" key="1">
    <source>
        <dbReference type="HAMAP-Rule" id="MF_00569"/>
    </source>
</evidence>
<comment type="function">
    <text evidence="1">Catalyzes the condensation of iminoaspartate with dihydroxyacetone phosphate to form quinolinate.</text>
</comment>
<comment type="catalytic activity">
    <reaction evidence="1">
        <text>iminosuccinate + dihydroxyacetone phosphate = quinolinate + phosphate + 2 H2O + H(+)</text>
        <dbReference type="Rhea" id="RHEA:25888"/>
        <dbReference type="ChEBI" id="CHEBI:15377"/>
        <dbReference type="ChEBI" id="CHEBI:15378"/>
        <dbReference type="ChEBI" id="CHEBI:29959"/>
        <dbReference type="ChEBI" id="CHEBI:43474"/>
        <dbReference type="ChEBI" id="CHEBI:57642"/>
        <dbReference type="ChEBI" id="CHEBI:77875"/>
        <dbReference type="EC" id="2.5.1.72"/>
    </reaction>
    <physiologicalReaction direction="left-to-right" evidence="1">
        <dbReference type="Rhea" id="RHEA:25889"/>
    </physiologicalReaction>
</comment>
<comment type="cofactor">
    <cofactor evidence="1">
        <name>[4Fe-4S] cluster</name>
        <dbReference type="ChEBI" id="CHEBI:49883"/>
    </cofactor>
    <text evidence="1">Binds 1 [4Fe-4S] cluster per subunit.</text>
</comment>
<comment type="pathway">
    <text evidence="1">Cofactor biosynthesis; NAD(+) biosynthesis; quinolinate from iminoaspartate: step 1/1.</text>
</comment>
<comment type="subcellular location">
    <subcellularLocation>
        <location evidence="1">Cytoplasm</location>
    </subcellularLocation>
</comment>
<comment type="similarity">
    <text evidence="1">Belongs to the quinolinate synthase family. Type 3 subfamily.</text>
</comment>
<proteinExistence type="inferred from homology"/>
<keyword id="KW-0004">4Fe-4S</keyword>
<keyword id="KW-0963">Cytoplasm</keyword>
<keyword id="KW-0408">Iron</keyword>
<keyword id="KW-0411">Iron-sulfur</keyword>
<keyword id="KW-0479">Metal-binding</keyword>
<keyword id="KW-0662">Pyridine nucleotide biosynthesis</keyword>
<keyword id="KW-0808">Transferase</keyword>
<protein>
    <recommendedName>
        <fullName evidence="1">Quinolinate synthase</fullName>
        <ecNumber evidence="1">2.5.1.72</ecNumber>
    </recommendedName>
</protein>
<name>NADA_LISIN</name>
<sequence>MNLLEKVEQDTMPARYKHMTSQEMIARVTEIKAQLGEDLFIPCHHYQKDEVVPFADAIGDSLQLAQIAANNKKAKHIVFCGVHFMAETADMLTTNEQIVTLPDMRAGCSMADMADIHQLTNAWPKLQHLFGDTILPVTYINSTAAIKSFVGEHGGTTVTSSNATKIVSWALQQKERIFFLPDQHLGRNTAFELGIPLEHMAIWNPIKNELEYDGNLDDCKVILWKGYCSVHQHFTVKNIENIRKNHPNMRIIVHPECTHEVVSLADDSGSTKKIVTEISNAAPGTEWAVGTEANLVGRIIQENPDKKIVSLNPFMCPCMTMNRIDLPHLLWTLEAIQNGEQRNQIKVDEHTTKFALKALERMLQLS</sequence>